<organism>
    <name type="scientific">Picosynechococcus sp. (strain ATCC 27264 / PCC 7002 / PR-6)</name>
    <name type="common">Agmenellum quadruplicatum</name>
    <dbReference type="NCBI Taxonomy" id="32049"/>
    <lineage>
        <taxon>Bacteria</taxon>
        <taxon>Bacillati</taxon>
        <taxon>Cyanobacteriota</taxon>
        <taxon>Cyanophyceae</taxon>
        <taxon>Oscillatoriophycideae</taxon>
        <taxon>Chroococcales</taxon>
        <taxon>Geminocystaceae</taxon>
        <taxon>Picosynechococcus</taxon>
    </lineage>
</organism>
<sequence>MDKFLSSAPVLLTAMMVFTAGLLIEFNRFFPDLLFHP</sequence>
<feature type="chain" id="PRO_0000354119" description="Photosystem I reaction center subunit IX">
    <location>
        <begin position="1"/>
        <end position="37"/>
    </location>
</feature>
<feature type="transmembrane region" description="Helical" evidence="1">
    <location>
        <begin position="4"/>
        <end position="24"/>
    </location>
</feature>
<evidence type="ECO:0000255" key="1">
    <source>
        <dbReference type="HAMAP-Rule" id="MF_00522"/>
    </source>
</evidence>
<comment type="function">
    <text evidence="1">May help in the organization of the PsaE and PsaF subunits.</text>
</comment>
<comment type="subcellular location">
    <subcellularLocation>
        <location evidence="1">Cellular thylakoid membrane</location>
        <topology evidence="1">Single-pass membrane protein</topology>
    </subcellularLocation>
</comment>
<comment type="similarity">
    <text evidence="1">Belongs to the PsaJ family.</text>
</comment>
<proteinExistence type="inferred from homology"/>
<protein>
    <recommendedName>
        <fullName evidence="1">Photosystem I reaction center subunit IX</fullName>
    </recommendedName>
</protein>
<accession>B1XJF2</accession>
<dbReference type="EMBL" id="CP000951">
    <property type="protein sequence ID" value="ACA99012.1"/>
    <property type="molecule type" value="Genomic_DNA"/>
</dbReference>
<dbReference type="RefSeq" id="WP_012306636.1">
    <property type="nucleotide sequence ID" value="NZ_JAHHPU010000001.1"/>
</dbReference>
<dbReference type="SMR" id="B1XJF2"/>
<dbReference type="STRING" id="32049.SYNPCC7002_A1009"/>
<dbReference type="KEGG" id="syp:SYNPCC7002_A1009"/>
<dbReference type="eggNOG" id="ENOG5033A5A">
    <property type="taxonomic scope" value="Bacteria"/>
</dbReference>
<dbReference type="HOGENOM" id="CLU_212133_1_1_3"/>
<dbReference type="Proteomes" id="UP000001688">
    <property type="component" value="Chromosome"/>
</dbReference>
<dbReference type="GO" id="GO:0009522">
    <property type="term" value="C:photosystem I"/>
    <property type="evidence" value="ECO:0007669"/>
    <property type="project" value="UniProtKB-KW"/>
</dbReference>
<dbReference type="GO" id="GO:0031676">
    <property type="term" value="C:plasma membrane-derived thylakoid membrane"/>
    <property type="evidence" value="ECO:0007669"/>
    <property type="project" value="UniProtKB-SubCell"/>
</dbReference>
<dbReference type="GO" id="GO:0015979">
    <property type="term" value="P:photosynthesis"/>
    <property type="evidence" value="ECO:0007669"/>
    <property type="project" value="UniProtKB-UniRule"/>
</dbReference>
<dbReference type="Gene3D" id="1.20.5.510">
    <property type="entry name" value="Single helix bin"/>
    <property type="match status" value="1"/>
</dbReference>
<dbReference type="HAMAP" id="MF_00522">
    <property type="entry name" value="PSI_PsaJ"/>
    <property type="match status" value="1"/>
</dbReference>
<dbReference type="InterPro" id="IPR002615">
    <property type="entry name" value="PSI_PsaJ"/>
</dbReference>
<dbReference type="InterPro" id="IPR036062">
    <property type="entry name" value="PSI_PsaJ_sf"/>
</dbReference>
<dbReference type="NCBIfam" id="NF002743">
    <property type="entry name" value="PRK02733.1"/>
    <property type="match status" value="1"/>
</dbReference>
<dbReference type="PANTHER" id="PTHR36082">
    <property type="match status" value="1"/>
</dbReference>
<dbReference type="PANTHER" id="PTHR36082:SF2">
    <property type="entry name" value="PHOTOSYSTEM I REACTION CENTER SUBUNIT IX"/>
    <property type="match status" value="1"/>
</dbReference>
<dbReference type="Pfam" id="PF01701">
    <property type="entry name" value="PSI_PsaJ"/>
    <property type="match status" value="1"/>
</dbReference>
<dbReference type="SUPFAM" id="SSF81544">
    <property type="entry name" value="Subunit IX of photosystem I reaction centre, PsaJ"/>
    <property type="match status" value="1"/>
</dbReference>
<keyword id="KW-0472">Membrane</keyword>
<keyword id="KW-0602">Photosynthesis</keyword>
<keyword id="KW-0603">Photosystem I</keyword>
<keyword id="KW-1185">Reference proteome</keyword>
<keyword id="KW-0793">Thylakoid</keyword>
<keyword id="KW-0812">Transmembrane</keyword>
<keyword id="KW-1133">Transmembrane helix</keyword>
<name>PSAJ_PICP2</name>
<gene>
    <name evidence="1" type="primary">psaJ</name>
    <name type="ordered locus">SYNPCC7002_A1009</name>
</gene>
<reference key="1">
    <citation type="submission" date="2008-02" db="EMBL/GenBank/DDBJ databases">
        <title>Complete sequence of Synechococcus sp. PCC 7002.</title>
        <authorList>
            <person name="Li T."/>
            <person name="Zhao J."/>
            <person name="Zhao C."/>
            <person name="Liu Z."/>
            <person name="Zhao F."/>
            <person name="Marquardt J."/>
            <person name="Nomura C.T."/>
            <person name="Persson S."/>
            <person name="Detter J.C."/>
            <person name="Richardson P.M."/>
            <person name="Lanz C."/>
            <person name="Schuster S.C."/>
            <person name="Wang J."/>
            <person name="Li S."/>
            <person name="Huang X."/>
            <person name="Cai T."/>
            <person name="Yu Z."/>
            <person name="Luo J."/>
            <person name="Zhao J."/>
            <person name="Bryant D.A."/>
        </authorList>
    </citation>
    <scope>NUCLEOTIDE SEQUENCE [LARGE SCALE GENOMIC DNA]</scope>
    <source>
        <strain>ATCC 27264 / PCC 7002 / PR-6</strain>
    </source>
</reference>